<name>RS7_SHEB9</name>
<gene>
    <name evidence="1" type="primary">rpsG</name>
    <name type="ordered locus">Sbal195_0196</name>
</gene>
<protein>
    <recommendedName>
        <fullName evidence="1">Small ribosomal subunit protein uS7</fullName>
    </recommendedName>
    <alternativeName>
        <fullName evidence="2">30S ribosomal protein S7</fullName>
    </alternativeName>
</protein>
<proteinExistence type="inferred from homology"/>
<accession>A9KW98</accession>
<evidence type="ECO:0000255" key="1">
    <source>
        <dbReference type="HAMAP-Rule" id="MF_00480"/>
    </source>
</evidence>
<evidence type="ECO:0000305" key="2"/>
<feature type="chain" id="PRO_1000081302" description="Small ribosomal subunit protein uS7">
    <location>
        <begin position="1"/>
        <end position="156"/>
    </location>
</feature>
<dbReference type="EMBL" id="CP000891">
    <property type="protein sequence ID" value="ABX47378.1"/>
    <property type="molecule type" value="Genomic_DNA"/>
</dbReference>
<dbReference type="RefSeq" id="WP_006083604.1">
    <property type="nucleotide sequence ID" value="NC_009997.1"/>
</dbReference>
<dbReference type="SMR" id="A9KW98"/>
<dbReference type="GeneID" id="11770555"/>
<dbReference type="KEGG" id="sbn:Sbal195_0196"/>
<dbReference type="HOGENOM" id="CLU_072226_1_1_6"/>
<dbReference type="Proteomes" id="UP000000770">
    <property type="component" value="Chromosome"/>
</dbReference>
<dbReference type="GO" id="GO:0015935">
    <property type="term" value="C:small ribosomal subunit"/>
    <property type="evidence" value="ECO:0007669"/>
    <property type="project" value="InterPro"/>
</dbReference>
<dbReference type="GO" id="GO:0019843">
    <property type="term" value="F:rRNA binding"/>
    <property type="evidence" value="ECO:0007669"/>
    <property type="project" value="UniProtKB-UniRule"/>
</dbReference>
<dbReference type="GO" id="GO:0003735">
    <property type="term" value="F:structural constituent of ribosome"/>
    <property type="evidence" value="ECO:0007669"/>
    <property type="project" value="InterPro"/>
</dbReference>
<dbReference type="GO" id="GO:0000049">
    <property type="term" value="F:tRNA binding"/>
    <property type="evidence" value="ECO:0007669"/>
    <property type="project" value="UniProtKB-UniRule"/>
</dbReference>
<dbReference type="GO" id="GO:0006412">
    <property type="term" value="P:translation"/>
    <property type="evidence" value="ECO:0007669"/>
    <property type="project" value="UniProtKB-UniRule"/>
</dbReference>
<dbReference type="CDD" id="cd14869">
    <property type="entry name" value="uS7_Bacteria"/>
    <property type="match status" value="1"/>
</dbReference>
<dbReference type="FunFam" id="1.10.455.10:FF:000001">
    <property type="entry name" value="30S ribosomal protein S7"/>
    <property type="match status" value="1"/>
</dbReference>
<dbReference type="Gene3D" id="1.10.455.10">
    <property type="entry name" value="Ribosomal protein S7 domain"/>
    <property type="match status" value="1"/>
</dbReference>
<dbReference type="HAMAP" id="MF_00480_B">
    <property type="entry name" value="Ribosomal_uS7_B"/>
    <property type="match status" value="1"/>
</dbReference>
<dbReference type="InterPro" id="IPR000235">
    <property type="entry name" value="Ribosomal_uS7"/>
</dbReference>
<dbReference type="InterPro" id="IPR005717">
    <property type="entry name" value="Ribosomal_uS7_bac/org-type"/>
</dbReference>
<dbReference type="InterPro" id="IPR020606">
    <property type="entry name" value="Ribosomal_uS7_CS"/>
</dbReference>
<dbReference type="InterPro" id="IPR023798">
    <property type="entry name" value="Ribosomal_uS7_dom"/>
</dbReference>
<dbReference type="InterPro" id="IPR036823">
    <property type="entry name" value="Ribosomal_uS7_dom_sf"/>
</dbReference>
<dbReference type="NCBIfam" id="TIGR01029">
    <property type="entry name" value="rpsG_bact"/>
    <property type="match status" value="1"/>
</dbReference>
<dbReference type="PANTHER" id="PTHR11205">
    <property type="entry name" value="RIBOSOMAL PROTEIN S7"/>
    <property type="match status" value="1"/>
</dbReference>
<dbReference type="Pfam" id="PF00177">
    <property type="entry name" value="Ribosomal_S7"/>
    <property type="match status" value="1"/>
</dbReference>
<dbReference type="PIRSF" id="PIRSF002122">
    <property type="entry name" value="RPS7p_RPS7a_RPS5e_RPS7o"/>
    <property type="match status" value="1"/>
</dbReference>
<dbReference type="SUPFAM" id="SSF47973">
    <property type="entry name" value="Ribosomal protein S7"/>
    <property type="match status" value="1"/>
</dbReference>
<dbReference type="PROSITE" id="PS00052">
    <property type="entry name" value="RIBOSOMAL_S7"/>
    <property type="match status" value="1"/>
</dbReference>
<keyword id="KW-0687">Ribonucleoprotein</keyword>
<keyword id="KW-0689">Ribosomal protein</keyword>
<keyword id="KW-0694">RNA-binding</keyword>
<keyword id="KW-0699">rRNA-binding</keyword>
<keyword id="KW-0820">tRNA-binding</keyword>
<reference key="1">
    <citation type="submission" date="2007-11" db="EMBL/GenBank/DDBJ databases">
        <title>Complete sequence of chromosome of Shewanella baltica OS195.</title>
        <authorList>
            <consortium name="US DOE Joint Genome Institute"/>
            <person name="Copeland A."/>
            <person name="Lucas S."/>
            <person name="Lapidus A."/>
            <person name="Barry K."/>
            <person name="Glavina del Rio T."/>
            <person name="Dalin E."/>
            <person name="Tice H."/>
            <person name="Pitluck S."/>
            <person name="Chain P."/>
            <person name="Malfatti S."/>
            <person name="Shin M."/>
            <person name="Vergez L."/>
            <person name="Schmutz J."/>
            <person name="Larimer F."/>
            <person name="Land M."/>
            <person name="Hauser L."/>
            <person name="Kyrpides N."/>
            <person name="Kim E."/>
            <person name="Brettar I."/>
            <person name="Rodrigues J."/>
            <person name="Konstantinidis K."/>
            <person name="Klappenbach J."/>
            <person name="Hofle M."/>
            <person name="Tiedje J."/>
            <person name="Richardson P."/>
        </authorList>
    </citation>
    <scope>NUCLEOTIDE SEQUENCE [LARGE SCALE GENOMIC DNA]</scope>
    <source>
        <strain>OS195</strain>
    </source>
</reference>
<comment type="function">
    <text evidence="1">One of the primary rRNA binding proteins, it binds directly to 16S rRNA where it nucleates assembly of the head domain of the 30S subunit. Is located at the subunit interface close to the decoding center, probably blocks exit of the E-site tRNA.</text>
</comment>
<comment type="subunit">
    <text evidence="1">Part of the 30S ribosomal subunit. Contacts proteins S9 and S11.</text>
</comment>
<comment type="similarity">
    <text evidence="1">Belongs to the universal ribosomal protein uS7 family.</text>
</comment>
<organism>
    <name type="scientific">Shewanella baltica (strain OS195)</name>
    <dbReference type="NCBI Taxonomy" id="399599"/>
    <lineage>
        <taxon>Bacteria</taxon>
        <taxon>Pseudomonadati</taxon>
        <taxon>Pseudomonadota</taxon>
        <taxon>Gammaproteobacteria</taxon>
        <taxon>Alteromonadales</taxon>
        <taxon>Shewanellaceae</taxon>
        <taxon>Shewanella</taxon>
    </lineage>
</organism>
<sequence>MPRRRVVGQRKILPDPKFHSELLAKFINVIMQDGKKSTAEKIIYKALDVVAEKKSESHLTILEAALDNVRPSVEVKSRRVGGSTYQVPCEVRPVRRNALAMRWLVEAARKRGEKSMALRLAGEMLDASENKGTAVKKREDVHRMAEANKAFAHYRW</sequence>